<comment type="function">
    <text evidence="1">Catalyzes the oxidation of uric acid to 5-hydroxyisourate, which is further processed to form (S)-allantoin.</text>
</comment>
<comment type="catalytic activity">
    <reaction>
        <text>urate + O2 + H2O = 5-hydroxyisourate + H2O2</text>
        <dbReference type="Rhea" id="RHEA:21368"/>
        <dbReference type="ChEBI" id="CHEBI:15377"/>
        <dbReference type="ChEBI" id="CHEBI:15379"/>
        <dbReference type="ChEBI" id="CHEBI:16240"/>
        <dbReference type="ChEBI" id="CHEBI:17775"/>
        <dbReference type="ChEBI" id="CHEBI:18072"/>
        <dbReference type="EC" id="1.7.3.3"/>
    </reaction>
</comment>
<comment type="pathway">
    <text>Purine metabolism; urate degradation; (S)-allantoin from urate: step 1/3.</text>
</comment>
<comment type="similarity">
    <text evidence="5">Belongs to the uricase family.</text>
</comment>
<comment type="sequence caution" evidence="5">
    <conflict type="erroneous initiation">
        <sequence resource="EMBL-CDS" id="ADJ16570"/>
    </conflict>
    <text>Extended N-terminus.</text>
</comment>
<gene>
    <name type="ordered locus">HacjB3_16061</name>
</gene>
<evidence type="ECO:0000250" key="1"/>
<evidence type="ECO:0000250" key="2">
    <source>
        <dbReference type="UniProtKB" id="D0VWQ1"/>
    </source>
</evidence>
<evidence type="ECO:0000250" key="3">
    <source>
        <dbReference type="UniProtKB" id="Q00511"/>
    </source>
</evidence>
<evidence type="ECO:0000256" key="4">
    <source>
        <dbReference type="SAM" id="MobiDB-lite"/>
    </source>
</evidence>
<evidence type="ECO:0000305" key="5"/>
<keyword id="KW-0560">Oxidoreductase</keyword>
<keyword id="KW-0614">Plasmid</keyword>
<keyword id="KW-0659">Purine metabolism</keyword>
<proteinExistence type="inferred from homology"/>
<protein>
    <recommendedName>
        <fullName>Uricase</fullName>
        <ecNumber>1.7.3.3</ecNumber>
    </recommendedName>
    <alternativeName>
        <fullName>Urate oxidase</fullName>
    </alternativeName>
</protein>
<dbReference type="EC" id="1.7.3.3"/>
<dbReference type="EMBL" id="CP002063">
    <property type="protein sequence ID" value="ADJ16570.1"/>
    <property type="status" value="ALT_INIT"/>
    <property type="molecule type" value="Genomic_DNA"/>
</dbReference>
<dbReference type="SMR" id="D8JBB7"/>
<dbReference type="GeneID" id="9421015"/>
<dbReference type="KEGG" id="hje:HacjB3_16061"/>
<dbReference type="eggNOG" id="arCOG11422">
    <property type="taxonomic scope" value="Archaea"/>
</dbReference>
<dbReference type="HOGENOM" id="CLU_048151_0_0_2"/>
<dbReference type="OrthoDB" id="303191at2157"/>
<dbReference type="UniPathway" id="UPA00394">
    <property type="reaction ID" value="UER00650"/>
</dbReference>
<dbReference type="Proteomes" id="UP000000390">
    <property type="component" value="Plasmid 1"/>
</dbReference>
<dbReference type="GO" id="GO:0004846">
    <property type="term" value="F:urate oxidase activity"/>
    <property type="evidence" value="ECO:0007669"/>
    <property type="project" value="UniProtKB-EC"/>
</dbReference>
<dbReference type="GO" id="GO:0006145">
    <property type="term" value="P:purine nucleobase catabolic process"/>
    <property type="evidence" value="ECO:0007669"/>
    <property type="project" value="TreeGrafter"/>
</dbReference>
<dbReference type="GO" id="GO:0019628">
    <property type="term" value="P:urate catabolic process"/>
    <property type="evidence" value="ECO:0007669"/>
    <property type="project" value="UniProtKB-UniPathway"/>
</dbReference>
<dbReference type="Gene3D" id="3.10.270.10">
    <property type="entry name" value="Urate Oxidase"/>
    <property type="match status" value="1"/>
</dbReference>
<dbReference type="InterPro" id="IPR002042">
    <property type="entry name" value="Uricase"/>
</dbReference>
<dbReference type="NCBIfam" id="TIGR03383">
    <property type="entry name" value="urate_oxi"/>
    <property type="match status" value="1"/>
</dbReference>
<dbReference type="PANTHER" id="PTHR42874">
    <property type="entry name" value="URICASE"/>
    <property type="match status" value="1"/>
</dbReference>
<dbReference type="PANTHER" id="PTHR42874:SF1">
    <property type="entry name" value="URICASE"/>
    <property type="match status" value="1"/>
</dbReference>
<dbReference type="Pfam" id="PF01014">
    <property type="entry name" value="Uricase"/>
    <property type="match status" value="2"/>
</dbReference>
<dbReference type="PIRSF" id="PIRSF000241">
    <property type="entry name" value="Urate_oxidase"/>
    <property type="match status" value="1"/>
</dbReference>
<dbReference type="PRINTS" id="PR00093">
    <property type="entry name" value="URICASE"/>
</dbReference>
<dbReference type="SUPFAM" id="SSF55620">
    <property type="entry name" value="Tetrahydrobiopterin biosynthesis enzymes-like"/>
    <property type="match status" value="2"/>
</dbReference>
<accession>D8JBB7</accession>
<organism>
    <name type="scientific">Halalkalicoccus jeotgali (strain DSM 18796 / CECT 7217 / JCM 14584 / KCTC 4019 / B3)</name>
    <dbReference type="NCBI Taxonomy" id="795797"/>
    <lineage>
        <taxon>Archaea</taxon>
        <taxon>Methanobacteriati</taxon>
        <taxon>Methanobacteriota</taxon>
        <taxon>Stenosarchaea group</taxon>
        <taxon>Halobacteria</taxon>
        <taxon>Halobacteriales</taxon>
        <taxon>Halococcaceae</taxon>
        <taxon>Halalkalicoccus</taxon>
    </lineage>
</organism>
<feature type="chain" id="PRO_0000411961" description="Uricase">
    <location>
        <begin position="1"/>
        <end position="306"/>
    </location>
</feature>
<feature type="region of interest" description="Disordered" evidence="4">
    <location>
        <begin position="281"/>
        <end position="306"/>
    </location>
</feature>
<feature type="active site" description="Charge relay system" evidence="2">
    <location>
        <position position="5"/>
    </location>
</feature>
<feature type="active site" description="Charge relay system" evidence="2">
    <location>
        <position position="65"/>
    </location>
</feature>
<feature type="binding site" evidence="3">
    <location>
        <position position="65"/>
    </location>
    <ligand>
        <name>urate</name>
        <dbReference type="ChEBI" id="CHEBI:17775"/>
    </ligand>
</feature>
<feature type="binding site" evidence="3">
    <location>
        <position position="66"/>
    </location>
    <ligand>
        <name>urate</name>
        <dbReference type="ChEBI" id="CHEBI:17775"/>
    </ligand>
</feature>
<feature type="binding site" evidence="3">
    <location>
        <position position="175"/>
    </location>
    <ligand>
        <name>urate</name>
        <dbReference type="ChEBI" id="CHEBI:17775"/>
    </ligand>
</feature>
<feature type="binding site" evidence="3">
    <location>
        <position position="192"/>
    </location>
    <ligand>
        <name>urate</name>
        <dbReference type="ChEBI" id="CHEBI:17775"/>
    </ligand>
</feature>
<feature type="binding site" evidence="3">
    <location>
        <position position="240"/>
    </location>
    <ligand>
        <name>urate</name>
        <dbReference type="ChEBI" id="CHEBI:17775"/>
    </ligand>
</feature>
<feature type="binding site" evidence="3">
    <location>
        <position position="241"/>
    </location>
    <ligand>
        <name>urate</name>
        <dbReference type="ChEBI" id="CHEBI:17775"/>
    </ligand>
</feature>
<feature type="binding site" evidence="3">
    <location>
        <position position="267"/>
    </location>
    <ligand>
        <name>urate</name>
        <dbReference type="ChEBI" id="CHEBI:17775"/>
    </ligand>
</feature>
<reference key="1">
    <citation type="journal article" date="2010" name="J. Bacteriol.">
        <title>Complete genome sequence of Halalkalicoccus jeotgali B3(T), an extremely halophilic archaeon.</title>
        <authorList>
            <person name="Roh S.W."/>
            <person name="Nam Y.D."/>
            <person name="Nam S.H."/>
            <person name="Choi S.H."/>
            <person name="Park H.S."/>
            <person name="Bae J.W."/>
        </authorList>
    </citation>
    <scope>NUCLEOTIDE SEQUENCE [LARGE SCALE GENOMIC DNA]</scope>
    <source>
        <strain>DSM 18796 / CECT 7217 / JCM 14584 / KCTC 4019 / B3</strain>
    </source>
</reference>
<name>URIC_HALJB</name>
<sequence length="306" mass="35081">MNYGKEQVAVYRTYANPLEGVRTIPESSFDGRDNILFGLEVRVQFEGEEFLPSFSEADNTTVVATDSMKNFVLHQAGEYEGATAEGFLHFVGTEFLETYPHVEAVTMSATEYPFDERPVPGDDGFDPSDLVFRVSDDESAFGEIYLEREGDELRFEEQTSGVTEIELVKVKENSFTGYVQDEYTTLPEREDRALYISLDVFWTYSDPEDALGDEPQRYVPAEQVRDIAQVVFHEVNSNSIQDLIYQIGLRVLERYPQLESVNFEANNRTWIEVRDDLDGDAKVLREPPRPTGYQQFSMDRSDLEEQ</sequence>
<geneLocation type="plasmid">
    <name>1</name>
</geneLocation>